<gene>
    <name type="primary">HACE1</name>
    <name type="ORF">RCJMB04_37k12</name>
</gene>
<feature type="chain" id="PRO_0000415844" description="E3 ubiquitin-protein ligase HACE1">
    <location>
        <begin position="1"/>
        <end position="942"/>
    </location>
</feature>
<feature type="repeat" description="ANK 1" evidence="1">
    <location>
        <begin position="23"/>
        <end position="55"/>
    </location>
</feature>
<feature type="repeat" description="ANK 2" evidence="1">
    <location>
        <begin position="64"/>
        <end position="93"/>
    </location>
</feature>
<feature type="repeat" description="ANK 3" evidence="1">
    <location>
        <begin position="97"/>
        <end position="126"/>
    </location>
</feature>
<feature type="repeat" description="ANK 4" evidence="1">
    <location>
        <begin position="130"/>
        <end position="159"/>
    </location>
</feature>
<feature type="repeat" description="ANK 5" evidence="1">
    <location>
        <begin position="163"/>
        <end position="192"/>
    </location>
</feature>
<feature type="repeat" description="ANK 6" evidence="1">
    <location>
        <begin position="196"/>
        <end position="226"/>
    </location>
</feature>
<feature type="repeat" description="ANK 7" evidence="1">
    <location>
        <begin position="228"/>
        <end position="253"/>
    </location>
</feature>
<feature type="domain" description="HECT" evidence="2">
    <location>
        <begin position="607"/>
        <end position="942"/>
    </location>
</feature>
<feature type="region of interest" description="Disordered" evidence="3">
    <location>
        <begin position="428"/>
        <end position="459"/>
    </location>
</feature>
<feature type="compositionally biased region" description="Basic and acidic residues" evidence="3">
    <location>
        <begin position="447"/>
        <end position="459"/>
    </location>
</feature>
<feature type="active site" description="Glycyl thioester intermediate" evidence="2">
    <location>
        <position position="909"/>
    </location>
</feature>
<feature type="splice variant" id="VSP_042411" description="In isoform 2." evidence="4">
    <original>GQGVVREWFDILSSEIVNPDYALFTQSADGTTFQPNSNSSVNPDHLNYFRFAGQILGLALNHRQLVNIYFTRSFYKHILGIPVNYQDVASIDPEYAKNLQWILDNDISDLGLELTFSVETDVFGAMEEVPLKPGGASILVTQENKAEYVQLVTELRMTRAIQPQINAFLQGFHMFIPPSLIQLFDEYELELLLSGMPEIDVNDWLKNTEYTSGYERGDQVIQWFWDVVEELTQEERVLLLQFVTGSSRVPHGGFAHIMGGSGLQNFTIAAVPYTANLLPTSSTCINMLKLPEYPSKEILKDRLLVALHCGSYGYTMA</original>
    <variation>EQPSSQTATLL</variation>
    <location>
        <begin position="626"/>
        <end position="942"/>
    </location>
</feature>
<accession>E1C656</accession>
<accession>Q5F340</accession>
<sequence length="942" mass="106295">MERAMEQLNRLTRSLRRARTVELPDDNETAVYTLMPMVMADQHRSVSELLSNSKFDVNYAFGRVKRSLLHIAANCGSVECLVLLLKKGANPNYQDISGCTPLHLAARNGQKKCMSKLLEYSADVNICNNEGLTAIHWLAVNGRTELLHDLVQHVSNVDVEDAMGQTALHVACQNGHKTTVQCLLDSGADINRPNVSGATPLYFACSHGQRDTAQILLMRGAKYLPDKNGITPLDLCVQGGYGETCEVLIQYHPRLFQTIIQMTQNEDLRENMLRQVLEHLSQQSESQYLKILTSLAEVATTNGHKLLSLSSNYEAQMKSLLRIVRIFCHVFRIGPSSPSNGNDMGYNGNKTPRSQVFKVRKVYDVVRKIDVKEMNFTKHAFINQTSHEQEPLELLWHSLDEWLVLIATELMKNKRDSANITSILLKQKGPDHQDATPTPSFAAAGTESRKELSTDTGDSKTYEVAGKQEAYADCQDVISMTANRLSAVIQAFYMCCSCQMPQGMTSPRFIEFVCKHDDVLKCFVNRNPKIIFDHFHFLLECPELMSRFMHIIKAQPFKDRCEWFYEHLHSGQPDSDMVHRPVNENDILLVHRDSIFRSSCEVVSKANCAKLKQGIAVRFHGEEGMGQGVVREWFDILSSEIVNPDYALFTQSADGTTFQPNSNSSVNPDHLNYFRFAGQILGLALNHRQLVNIYFTRSFYKHILGIPVNYQDVASIDPEYAKNLQWILDNDISDLGLELTFSVETDVFGAMEEVPLKPGGASILVTQENKAEYVQLVTELRMTRAIQPQINAFLQGFHMFIPPSLIQLFDEYELELLLSGMPEIDVNDWLKNTEYTSGYERGDQVIQWFWDVVEELTQEERVLLLQFVTGSSRVPHGGFAHIMGGSGLQNFTIAAVPYTANLLPTSSTCINMLKLPEYPSKEILKDRLLVALHCGSYGYTMA</sequence>
<comment type="function">
    <text evidence="1">E3 ubiquitin-protein ligase involved in Golgi membrane fusion and regulation of small GTPases. Acts as a regulator of Golgi membrane dynamics during the cell cycle: recruited to Golgi membrane by Rab proteins and regulates postmitotic Golgi membrane fusion. Acts by mediating ubiquitination during mitotic Golgi disassembly, ubiquitination serving as a signal for Golgi reassembly later, after cell division.</text>
</comment>
<comment type="catalytic activity">
    <reaction evidence="1">
        <text>S-ubiquitinyl-[E2 ubiquitin-conjugating enzyme]-L-cysteine + [acceptor protein]-L-lysine = [E2 ubiquitin-conjugating enzyme]-L-cysteine + N(6)-ubiquitinyl-[acceptor protein]-L-lysine.</text>
        <dbReference type="EC" id="2.3.2.26"/>
    </reaction>
</comment>
<comment type="pathway">
    <text evidence="1">Protein modification; protein ubiquitination.</text>
</comment>
<comment type="subcellular location">
    <subcellularLocation>
        <location evidence="1">Golgi apparatus</location>
        <location evidence="1">Golgi stack membrane</location>
    </subcellularLocation>
    <subcellularLocation>
        <location evidence="1">Cytoplasm</location>
    </subcellularLocation>
    <subcellularLocation>
        <location evidence="1">Endoplasmic reticulum</location>
    </subcellularLocation>
</comment>
<comment type="alternative products">
    <event type="alternative splicing"/>
    <isoform>
        <id>E1C656-1</id>
        <name>1</name>
        <sequence type="displayed"/>
    </isoform>
    <isoform>
        <id>E1C656-2</id>
        <name>2</name>
        <sequence type="described" ref="VSP_042411"/>
    </isoform>
</comment>
<dbReference type="EC" id="2.3.2.26" evidence="1"/>
<dbReference type="EMBL" id="AJ851810">
    <property type="protein sequence ID" value="CAH65444.1"/>
    <property type="molecule type" value="mRNA"/>
</dbReference>
<dbReference type="EMBL" id="AADN02002150">
    <property type="status" value="NOT_ANNOTATED_CDS"/>
    <property type="molecule type" value="Genomic_DNA"/>
</dbReference>
<dbReference type="EMBL" id="AADN02002151">
    <property type="status" value="NOT_ANNOTATED_CDS"/>
    <property type="molecule type" value="Genomic_DNA"/>
</dbReference>
<dbReference type="EMBL" id="AADN02002152">
    <property type="status" value="NOT_ANNOTATED_CDS"/>
    <property type="molecule type" value="Genomic_DNA"/>
</dbReference>
<dbReference type="RefSeq" id="NP_001265084.1">
    <molecule id="E1C656-1"/>
    <property type="nucleotide sequence ID" value="NM_001278155.2"/>
</dbReference>
<dbReference type="SMR" id="E1C656"/>
<dbReference type="FunCoup" id="E1C656">
    <property type="interactions" value="2062"/>
</dbReference>
<dbReference type="STRING" id="9031.ENSGALP00000024819"/>
<dbReference type="GlyGen" id="E1C656">
    <property type="glycosylation" value="1 site"/>
</dbReference>
<dbReference type="PaxDb" id="9031-ENSGALP00000024820"/>
<dbReference type="Ensembl" id="ENSGALT00010029751.1">
    <molecule id="E1C656-2"/>
    <property type="protein sequence ID" value="ENSGALP00010017319.1"/>
    <property type="gene ID" value="ENSGALG00010012419.1"/>
</dbReference>
<dbReference type="Ensembl" id="ENSGALT00010029779.1">
    <molecule id="E1C656-1"/>
    <property type="protein sequence ID" value="ENSGALP00010017338.1"/>
    <property type="gene ID" value="ENSGALG00010012419.1"/>
</dbReference>
<dbReference type="GeneID" id="421788"/>
<dbReference type="KEGG" id="gga:421788"/>
<dbReference type="CTD" id="57531"/>
<dbReference type="VEuPathDB" id="HostDB:geneid_421788"/>
<dbReference type="eggNOG" id="KOG0939">
    <property type="taxonomic scope" value="Eukaryota"/>
</dbReference>
<dbReference type="eggNOG" id="KOG4177">
    <property type="taxonomic scope" value="Eukaryota"/>
</dbReference>
<dbReference type="GeneTree" id="ENSGT00940000155839"/>
<dbReference type="HOGENOM" id="CLU_015878_0_0_1"/>
<dbReference type="InParanoid" id="E1C656"/>
<dbReference type="OMA" id="QDHQDAT"/>
<dbReference type="OrthoDB" id="8068875at2759"/>
<dbReference type="PhylomeDB" id="E1C656"/>
<dbReference type="TreeFam" id="TF323417"/>
<dbReference type="Reactome" id="R-GGA-983168">
    <property type="pathway name" value="Antigen processing: Ubiquitination &amp; Proteasome degradation"/>
</dbReference>
<dbReference type="UniPathway" id="UPA00143"/>
<dbReference type="PRO" id="PR:E1C656"/>
<dbReference type="Proteomes" id="UP000000539">
    <property type="component" value="Chromosome 3"/>
</dbReference>
<dbReference type="Bgee" id="ENSGALG00000015415">
    <property type="expression patterns" value="Expressed in spermatid and 13 other cell types or tissues"/>
</dbReference>
<dbReference type="GO" id="GO:0005737">
    <property type="term" value="C:cytoplasm"/>
    <property type="evidence" value="ECO:0000318"/>
    <property type="project" value="GO_Central"/>
</dbReference>
<dbReference type="GO" id="GO:0005783">
    <property type="term" value="C:endoplasmic reticulum"/>
    <property type="evidence" value="ECO:0007669"/>
    <property type="project" value="UniProtKB-SubCell"/>
</dbReference>
<dbReference type="GO" id="GO:0032580">
    <property type="term" value="C:Golgi cisterna membrane"/>
    <property type="evidence" value="ECO:0007669"/>
    <property type="project" value="UniProtKB-SubCell"/>
</dbReference>
<dbReference type="GO" id="GO:0000139">
    <property type="term" value="C:Golgi membrane"/>
    <property type="evidence" value="ECO:0000250"/>
    <property type="project" value="UniProtKB"/>
</dbReference>
<dbReference type="GO" id="GO:0005634">
    <property type="term" value="C:nucleus"/>
    <property type="evidence" value="ECO:0000318"/>
    <property type="project" value="GO_Central"/>
</dbReference>
<dbReference type="GO" id="GO:0031267">
    <property type="term" value="F:small GTPase binding"/>
    <property type="evidence" value="ECO:0000250"/>
    <property type="project" value="UniProtKB"/>
</dbReference>
<dbReference type="GO" id="GO:0061630">
    <property type="term" value="F:ubiquitin protein ligase activity"/>
    <property type="evidence" value="ECO:0000318"/>
    <property type="project" value="GO_Central"/>
</dbReference>
<dbReference type="GO" id="GO:0004842">
    <property type="term" value="F:ubiquitin-protein transferase activity"/>
    <property type="evidence" value="ECO:0000250"/>
    <property type="project" value="UniProtKB"/>
</dbReference>
<dbReference type="GO" id="GO:0007030">
    <property type="term" value="P:Golgi organization"/>
    <property type="evidence" value="ECO:0000250"/>
    <property type="project" value="UniProtKB"/>
</dbReference>
<dbReference type="GO" id="GO:0061025">
    <property type="term" value="P:membrane fusion"/>
    <property type="evidence" value="ECO:0000250"/>
    <property type="project" value="UniProtKB"/>
</dbReference>
<dbReference type="GO" id="GO:0070936">
    <property type="term" value="P:protein K48-linked ubiquitination"/>
    <property type="evidence" value="ECO:0000250"/>
    <property type="project" value="UniProtKB"/>
</dbReference>
<dbReference type="GO" id="GO:0016567">
    <property type="term" value="P:protein ubiquitination"/>
    <property type="evidence" value="ECO:0000250"/>
    <property type="project" value="UniProtKB"/>
</dbReference>
<dbReference type="GO" id="GO:0030334">
    <property type="term" value="P:regulation of cell migration"/>
    <property type="evidence" value="ECO:0000250"/>
    <property type="project" value="UniProtKB"/>
</dbReference>
<dbReference type="GO" id="GO:0006511">
    <property type="term" value="P:ubiquitin-dependent protein catabolic process"/>
    <property type="evidence" value="ECO:0000250"/>
    <property type="project" value="UniProtKB"/>
</dbReference>
<dbReference type="CDD" id="cd00078">
    <property type="entry name" value="HECTc"/>
    <property type="match status" value="1"/>
</dbReference>
<dbReference type="FunFam" id="3.90.1750.10:FF:000026">
    <property type="entry name" value="E3 ubiquitin-protein ligase HACE1"/>
    <property type="match status" value="1"/>
</dbReference>
<dbReference type="FunFam" id="1.25.40.20:FF:000051">
    <property type="entry name" value="E3 ubiquitin-protein ligase HACE1 isoform X1"/>
    <property type="match status" value="1"/>
</dbReference>
<dbReference type="FunFam" id="3.30.2410.10:FF:000016">
    <property type="entry name" value="E3 ubiquitin-protein ligase HACE1 isoform X1"/>
    <property type="match status" value="1"/>
</dbReference>
<dbReference type="FunFam" id="3.90.1750.10:FF:000019">
    <property type="entry name" value="E3 ubiquitin-protein ligase HACE1 isoform X1"/>
    <property type="match status" value="1"/>
</dbReference>
<dbReference type="FunFam" id="3.30.2160.10:FF:000001">
    <property type="entry name" value="E3 ubiquitin-protein ligase NEDD4-like"/>
    <property type="match status" value="1"/>
</dbReference>
<dbReference type="FunFam" id="1.25.40.20:FF:000256">
    <property type="entry name" value="HECT domain and ankyrin repeat containing E3 ubiquitin protein ligase 1"/>
    <property type="match status" value="1"/>
</dbReference>
<dbReference type="Gene3D" id="1.25.40.20">
    <property type="entry name" value="Ankyrin repeat-containing domain"/>
    <property type="match status" value="2"/>
</dbReference>
<dbReference type="Gene3D" id="3.30.2160.10">
    <property type="entry name" value="Hect, E3 ligase catalytic domain"/>
    <property type="match status" value="1"/>
</dbReference>
<dbReference type="Gene3D" id="3.30.2410.10">
    <property type="entry name" value="Hect, E3 ligase catalytic domain"/>
    <property type="match status" value="1"/>
</dbReference>
<dbReference type="Gene3D" id="3.90.1750.10">
    <property type="entry name" value="Hect, E3 ligase catalytic domains"/>
    <property type="match status" value="1"/>
</dbReference>
<dbReference type="InterPro" id="IPR002110">
    <property type="entry name" value="Ankyrin_rpt"/>
</dbReference>
<dbReference type="InterPro" id="IPR036770">
    <property type="entry name" value="Ankyrin_rpt-contain_sf"/>
</dbReference>
<dbReference type="InterPro" id="IPR050409">
    <property type="entry name" value="E3_ubiq-protein_ligase"/>
</dbReference>
<dbReference type="InterPro" id="IPR000569">
    <property type="entry name" value="HECT_dom"/>
</dbReference>
<dbReference type="InterPro" id="IPR035983">
    <property type="entry name" value="Hect_E3_ubiquitin_ligase"/>
</dbReference>
<dbReference type="PANTHER" id="PTHR11254:SF363">
    <property type="entry name" value="E3 UBIQUITIN-PROTEIN LIGASE HACE1"/>
    <property type="match status" value="1"/>
</dbReference>
<dbReference type="PANTHER" id="PTHR11254">
    <property type="entry name" value="HECT DOMAIN UBIQUITIN-PROTEIN LIGASE"/>
    <property type="match status" value="1"/>
</dbReference>
<dbReference type="Pfam" id="PF12796">
    <property type="entry name" value="Ank_2"/>
    <property type="match status" value="2"/>
</dbReference>
<dbReference type="Pfam" id="PF13857">
    <property type="entry name" value="Ank_5"/>
    <property type="match status" value="1"/>
</dbReference>
<dbReference type="Pfam" id="PF00632">
    <property type="entry name" value="HECT"/>
    <property type="match status" value="1"/>
</dbReference>
<dbReference type="PRINTS" id="PR01415">
    <property type="entry name" value="ANKYRIN"/>
</dbReference>
<dbReference type="SMART" id="SM00248">
    <property type="entry name" value="ANK"/>
    <property type="match status" value="6"/>
</dbReference>
<dbReference type="SMART" id="SM00119">
    <property type="entry name" value="HECTc"/>
    <property type="match status" value="1"/>
</dbReference>
<dbReference type="SUPFAM" id="SSF48403">
    <property type="entry name" value="Ankyrin repeat"/>
    <property type="match status" value="1"/>
</dbReference>
<dbReference type="SUPFAM" id="SSF56204">
    <property type="entry name" value="Hect, E3 ligase catalytic domain"/>
    <property type="match status" value="1"/>
</dbReference>
<dbReference type="PROSITE" id="PS50297">
    <property type="entry name" value="ANK_REP_REGION"/>
    <property type="match status" value="1"/>
</dbReference>
<dbReference type="PROSITE" id="PS50088">
    <property type="entry name" value="ANK_REPEAT"/>
    <property type="match status" value="5"/>
</dbReference>
<dbReference type="PROSITE" id="PS50237">
    <property type="entry name" value="HECT"/>
    <property type="match status" value="1"/>
</dbReference>
<protein>
    <recommendedName>
        <fullName>E3 ubiquitin-protein ligase HACE1</fullName>
        <ecNumber evidence="1">2.3.2.26</ecNumber>
    </recommendedName>
    <alternativeName>
        <fullName>HECT domain and ankyrin repeat-containing E3 ubiquitin-protein ligase 1</fullName>
    </alternativeName>
    <alternativeName>
        <fullName evidence="1">HECT-type E3 ubiquitin transferase HACE1</fullName>
    </alternativeName>
</protein>
<keyword id="KW-0025">Alternative splicing</keyword>
<keyword id="KW-0040">ANK repeat</keyword>
<keyword id="KW-0131">Cell cycle</keyword>
<keyword id="KW-0963">Cytoplasm</keyword>
<keyword id="KW-0256">Endoplasmic reticulum</keyword>
<keyword id="KW-0333">Golgi apparatus</keyword>
<keyword id="KW-0472">Membrane</keyword>
<keyword id="KW-1185">Reference proteome</keyword>
<keyword id="KW-0677">Repeat</keyword>
<keyword id="KW-0808">Transferase</keyword>
<keyword id="KW-0833">Ubl conjugation pathway</keyword>
<proteinExistence type="evidence at transcript level"/>
<reference key="1">
    <citation type="journal article" date="2005" name="Genome Biol.">
        <title>Full-length cDNAs from chicken bursal lymphocytes to facilitate gene function analysis.</title>
        <authorList>
            <person name="Caldwell R.B."/>
            <person name="Kierzek A.M."/>
            <person name="Arakawa H."/>
            <person name="Bezzubov Y."/>
            <person name="Zaim J."/>
            <person name="Fiedler P."/>
            <person name="Kutter S."/>
            <person name="Blagodatski A."/>
            <person name="Kostovska D."/>
            <person name="Koter M."/>
            <person name="Plachy J."/>
            <person name="Carninci P."/>
            <person name="Hayashizaki Y."/>
            <person name="Buerstedde J.-M."/>
        </authorList>
    </citation>
    <scope>NUCLEOTIDE SEQUENCE [LARGE SCALE MRNA] (ISOFORM 2)</scope>
    <source>
        <strain>CB</strain>
        <tissue>Bursa of Fabricius</tissue>
    </source>
</reference>
<reference key="2">
    <citation type="journal article" date="2004" name="Nature">
        <title>Sequence and comparative analysis of the chicken genome provide unique perspectives on vertebrate evolution.</title>
        <authorList>
            <person name="Hillier L.W."/>
            <person name="Miller W."/>
            <person name="Birney E."/>
            <person name="Warren W."/>
            <person name="Hardison R.C."/>
            <person name="Ponting C.P."/>
            <person name="Bork P."/>
            <person name="Burt D.W."/>
            <person name="Groenen M.A.M."/>
            <person name="Delany M.E."/>
            <person name="Dodgson J.B."/>
            <person name="Chinwalla A.T."/>
            <person name="Cliften P.F."/>
            <person name="Clifton S.W."/>
            <person name="Delehaunty K.D."/>
            <person name="Fronick C."/>
            <person name="Fulton R.S."/>
            <person name="Graves T.A."/>
            <person name="Kremitzki C."/>
            <person name="Layman D."/>
            <person name="Magrini V."/>
            <person name="McPherson J.D."/>
            <person name="Miner T.L."/>
            <person name="Minx P."/>
            <person name="Nash W.E."/>
            <person name="Nhan M.N."/>
            <person name="Nelson J.O."/>
            <person name="Oddy L.G."/>
            <person name="Pohl C.S."/>
            <person name="Randall-Maher J."/>
            <person name="Smith S.M."/>
            <person name="Wallis J.W."/>
            <person name="Yang S.-P."/>
            <person name="Romanov M.N."/>
            <person name="Rondelli C.M."/>
            <person name="Paton B."/>
            <person name="Smith J."/>
            <person name="Morrice D."/>
            <person name="Daniels L."/>
            <person name="Tempest H.G."/>
            <person name="Robertson L."/>
            <person name="Masabanda J.S."/>
            <person name="Griffin D.K."/>
            <person name="Vignal A."/>
            <person name="Fillon V."/>
            <person name="Jacobbson L."/>
            <person name="Kerje S."/>
            <person name="Andersson L."/>
            <person name="Crooijmans R.P."/>
            <person name="Aerts J."/>
            <person name="van der Poel J.J."/>
            <person name="Ellegren H."/>
            <person name="Caldwell R.B."/>
            <person name="Hubbard S.J."/>
            <person name="Grafham D.V."/>
            <person name="Kierzek A.M."/>
            <person name="McLaren S.R."/>
            <person name="Overton I.M."/>
            <person name="Arakawa H."/>
            <person name="Beattie K.J."/>
            <person name="Bezzubov Y."/>
            <person name="Boardman P.E."/>
            <person name="Bonfield J.K."/>
            <person name="Croning M.D.R."/>
            <person name="Davies R.M."/>
            <person name="Francis M.D."/>
            <person name="Humphray S.J."/>
            <person name="Scott C.E."/>
            <person name="Taylor R.G."/>
            <person name="Tickle C."/>
            <person name="Brown W.R.A."/>
            <person name="Rogers J."/>
            <person name="Buerstedde J.-M."/>
            <person name="Wilson S.A."/>
            <person name="Stubbs L."/>
            <person name="Ovcharenko I."/>
            <person name="Gordon L."/>
            <person name="Lucas S."/>
            <person name="Miller M.M."/>
            <person name="Inoko H."/>
            <person name="Shiina T."/>
            <person name="Kaufman J."/>
            <person name="Salomonsen J."/>
            <person name="Skjoedt K."/>
            <person name="Wong G.K.-S."/>
            <person name="Wang J."/>
            <person name="Liu B."/>
            <person name="Wang J."/>
            <person name="Yu J."/>
            <person name="Yang H."/>
            <person name="Nefedov M."/>
            <person name="Koriabine M."/>
            <person name="Dejong P.J."/>
            <person name="Goodstadt L."/>
            <person name="Webber C."/>
            <person name="Dickens N.J."/>
            <person name="Letunic I."/>
            <person name="Suyama M."/>
            <person name="Torrents D."/>
            <person name="von Mering C."/>
            <person name="Zdobnov E.M."/>
            <person name="Makova K."/>
            <person name="Nekrutenko A."/>
            <person name="Elnitski L."/>
            <person name="Eswara P."/>
            <person name="King D.C."/>
            <person name="Yang S.-P."/>
            <person name="Tyekucheva S."/>
            <person name="Radakrishnan A."/>
            <person name="Harris R.S."/>
            <person name="Chiaromonte F."/>
            <person name="Taylor J."/>
            <person name="He J."/>
            <person name="Rijnkels M."/>
            <person name="Griffiths-Jones S."/>
            <person name="Ureta-Vidal A."/>
            <person name="Hoffman M.M."/>
            <person name="Severin J."/>
            <person name="Searle S.M.J."/>
            <person name="Law A.S."/>
            <person name="Speed D."/>
            <person name="Waddington D."/>
            <person name="Cheng Z."/>
            <person name="Tuzun E."/>
            <person name="Eichler E."/>
            <person name="Bao Z."/>
            <person name="Flicek P."/>
            <person name="Shteynberg D.D."/>
            <person name="Brent M.R."/>
            <person name="Bye J.M."/>
            <person name="Huckle E.J."/>
            <person name="Chatterji S."/>
            <person name="Dewey C."/>
            <person name="Pachter L."/>
            <person name="Kouranov A."/>
            <person name="Mourelatos Z."/>
            <person name="Hatzigeorgiou A.G."/>
            <person name="Paterson A.H."/>
            <person name="Ivarie R."/>
            <person name="Brandstrom M."/>
            <person name="Axelsson E."/>
            <person name="Backstrom N."/>
            <person name="Berlin S."/>
            <person name="Webster M.T."/>
            <person name="Pourquie O."/>
            <person name="Reymond A."/>
            <person name="Ucla C."/>
            <person name="Antonarakis S.E."/>
            <person name="Long M."/>
            <person name="Emerson J.J."/>
            <person name="Betran E."/>
            <person name="Dupanloup I."/>
            <person name="Kaessmann H."/>
            <person name="Hinrichs A.S."/>
            <person name="Bejerano G."/>
            <person name="Furey T.S."/>
            <person name="Harte R.A."/>
            <person name="Raney B."/>
            <person name="Siepel A."/>
            <person name="Kent W.J."/>
            <person name="Haussler D."/>
            <person name="Eyras E."/>
            <person name="Castelo R."/>
            <person name="Abril J.F."/>
            <person name="Castellano S."/>
            <person name="Camara F."/>
            <person name="Parra G."/>
            <person name="Guigo R."/>
            <person name="Bourque G."/>
            <person name="Tesler G."/>
            <person name="Pevzner P.A."/>
            <person name="Smit A."/>
            <person name="Fulton L.A."/>
            <person name="Mardis E.R."/>
            <person name="Wilson R.K."/>
        </authorList>
    </citation>
    <scope>NUCLEOTIDE SEQUENCE [LARGE SCALE GENOMIC DNA]</scope>
    <source>
        <strain>Red jungle fowl</strain>
    </source>
</reference>
<evidence type="ECO:0000250" key="1">
    <source>
        <dbReference type="UniProtKB" id="Q8IYU2"/>
    </source>
</evidence>
<evidence type="ECO:0000255" key="2">
    <source>
        <dbReference type="PROSITE-ProRule" id="PRU00104"/>
    </source>
</evidence>
<evidence type="ECO:0000256" key="3">
    <source>
        <dbReference type="SAM" id="MobiDB-lite"/>
    </source>
</evidence>
<evidence type="ECO:0000303" key="4">
    <source>
    </source>
</evidence>
<organism>
    <name type="scientific">Gallus gallus</name>
    <name type="common">Chicken</name>
    <dbReference type="NCBI Taxonomy" id="9031"/>
    <lineage>
        <taxon>Eukaryota</taxon>
        <taxon>Metazoa</taxon>
        <taxon>Chordata</taxon>
        <taxon>Craniata</taxon>
        <taxon>Vertebrata</taxon>
        <taxon>Euteleostomi</taxon>
        <taxon>Archelosauria</taxon>
        <taxon>Archosauria</taxon>
        <taxon>Dinosauria</taxon>
        <taxon>Saurischia</taxon>
        <taxon>Theropoda</taxon>
        <taxon>Coelurosauria</taxon>
        <taxon>Aves</taxon>
        <taxon>Neognathae</taxon>
        <taxon>Galloanserae</taxon>
        <taxon>Galliformes</taxon>
        <taxon>Phasianidae</taxon>
        <taxon>Phasianinae</taxon>
        <taxon>Gallus</taxon>
    </lineage>
</organism>
<name>HACE1_CHICK</name>